<keyword id="KW-0997">Cell inner membrane</keyword>
<keyword id="KW-1003">Cell membrane</keyword>
<keyword id="KW-0472">Membrane</keyword>
<keyword id="KW-0812">Transmembrane</keyword>
<keyword id="KW-1133">Transmembrane helix</keyword>
<comment type="subcellular location">
    <subcellularLocation>
        <location evidence="1">Cell inner membrane</location>
        <topology evidence="1">Multi-pass membrane protein</topology>
    </subcellularLocation>
</comment>
<comment type="similarity">
    <text evidence="1">Belongs to the UPF0761 family.</text>
</comment>
<feature type="chain" id="PRO_1000061943" description="UPF0761 membrane protein Ent638_4092">
    <location>
        <begin position="1"/>
        <end position="290"/>
    </location>
</feature>
<feature type="transmembrane region" description="Helical" evidence="1">
    <location>
        <begin position="44"/>
        <end position="64"/>
    </location>
</feature>
<feature type="transmembrane region" description="Helical" evidence="1">
    <location>
        <begin position="104"/>
        <end position="124"/>
    </location>
</feature>
<feature type="transmembrane region" description="Helical" evidence="1">
    <location>
        <begin position="140"/>
        <end position="160"/>
    </location>
</feature>
<feature type="transmembrane region" description="Helical" evidence="1">
    <location>
        <begin position="183"/>
        <end position="203"/>
    </location>
</feature>
<feature type="transmembrane region" description="Helical" evidence="1">
    <location>
        <begin position="210"/>
        <end position="230"/>
    </location>
</feature>
<feature type="transmembrane region" description="Helical" evidence="1">
    <location>
        <begin position="244"/>
        <end position="264"/>
    </location>
</feature>
<gene>
    <name type="ordered locus">Ent638_4092</name>
</gene>
<proteinExistence type="inferred from homology"/>
<name>Y4092_ENT38</name>
<organism>
    <name type="scientific">Enterobacter sp. (strain 638)</name>
    <dbReference type="NCBI Taxonomy" id="399742"/>
    <lineage>
        <taxon>Bacteria</taxon>
        <taxon>Pseudomonadati</taxon>
        <taxon>Pseudomonadota</taxon>
        <taxon>Gammaproteobacteria</taxon>
        <taxon>Enterobacterales</taxon>
        <taxon>Enterobacteriaceae</taxon>
        <taxon>Enterobacter</taxon>
    </lineage>
</organism>
<accession>A4WGB7</accession>
<protein>
    <recommendedName>
        <fullName evidence="1">UPF0761 membrane protein Ent638_4092</fullName>
    </recommendedName>
</protein>
<dbReference type="EMBL" id="CP000653">
    <property type="protein sequence ID" value="ABP62747.1"/>
    <property type="molecule type" value="Genomic_DNA"/>
</dbReference>
<dbReference type="RefSeq" id="WP_015961051.1">
    <property type="nucleotide sequence ID" value="NC_009436.1"/>
</dbReference>
<dbReference type="STRING" id="399742.Ent638_4092"/>
<dbReference type="KEGG" id="ent:Ent638_4092"/>
<dbReference type="eggNOG" id="COG1295">
    <property type="taxonomic scope" value="Bacteria"/>
</dbReference>
<dbReference type="HOGENOM" id="CLU_032288_0_0_6"/>
<dbReference type="OrthoDB" id="9808671at2"/>
<dbReference type="Proteomes" id="UP000000230">
    <property type="component" value="Chromosome"/>
</dbReference>
<dbReference type="GO" id="GO:0005886">
    <property type="term" value="C:plasma membrane"/>
    <property type="evidence" value="ECO:0007669"/>
    <property type="project" value="UniProtKB-SubCell"/>
</dbReference>
<dbReference type="HAMAP" id="MF_00672">
    <property type="entry name" value="UPF0761"/>
    <property type="match status" value="1"/>
</dbReference>
<dbReference type="InterPro" id="IPR023679">
    <property type="entry name" value="UPF0761_bac"/>
</dbReference>
<dbReference type="InterPro" id="IPR017039">
    <property type="entry name" value="Virul_fac_BrkB"/>
</dbReference>
<dbReference type="NCBIfam" id="NF002457">
    <property type="entry name" value="PRK01637.1"/>
    <property type="match status" value="1"/>
</dbReference>
<dbReference type="NCBIfam" id="TIGR00765">
    <property type="entry name" value="yihY_not_rbn"/>
    <property type="match status" value="1"/>
</dbReference>
<dbReference type="PANTHER" id="PTHR30213">
    <property type="entry name" value="INNER MEMBRANE PROTEIN YHJD"/>
    <property type="match status" value="1"/>
</dbReference>
<dbReference type="PANTHER" id="PTHR30213:SF0">
    <property type="entry name" value="UPF0761 MEMBRANE PROTEIN YIHY"/>
    <property type="match status" value="1"/>
</dbReference>
<dbReference type="Pfam" id="PF03631">
    <property type="entry name" value="Virul_fac_BrkB"/>
    <property type="match status" value="1"/>
</dbReference>
<dbReference type="PIRSF" id="PIRSF035875">
    <property type="entry name" value="RNase_BN"/>
    <property type="match status" value="1"/>
</dbReference>
<sequence>MLKNVHQKASHHTRPFRAWVKLLWQRIDEDNMTTLAGNLAYVSLLSLVPLVAVIFALFAAFPMFSEVSVQLRHFVFANFMPATGDVIQRYIEQFVANSSKMTAVGACGLIVTALLLMYAIDSALNTIWRSKKVRPKVYSFAVYWMILTLGPLLAGASLAISSYLLSLRWASELNTVIDNVLRIFPLILSWLAFWLLYSIVPTLRVPNRDAIVGALVAAILFELGKKGFALYITTFPSYQLIYGVLAVVPILFVWVYWTWCIVLLGAEITVTLGEYRKLKLAAEQEEADQP</sequence>
<reference key="1">
    <citation type="journal article" date="2010" name="PLoS Genet.">
        <title>Genome sequence of the plant growth promoting endophytic bacterium Enterobacter sp. 638.</title>
        <authorList>
            <person name="Taghavi S."/>
            <person name="van der Lelie D."/>
            <person name="Hoffman A."/>
            <person name="Zhang Y.B."/>
            <person name="Walla M.D."/>
            <person name="Vangronsveld J."/>
            <person name="Newman L."/>
            <person name="Monchy S."/>
        </authorList>
    </citation>
    <scope>NUCLEOTIDE SEQUENCE [LARGE SCALE GENOMIC DNA]</scope>
    <source>
        <strain>638</strain>
    </source>
</reference>
<evidence type="ECO:0000255" key="1">
    <source>
        <dbReference type="HAMAP-Rule" id="MF_00672"/>
    </source>
</evidence>